<sequence>MTIGLSVTNDVFARDILTVAQLNQAVGQLLERSIPSLWVRGEISNFTQAASGHWYFTLKDSRAAVRTVMFRSRAAQVGFVPRPGDQVEVRARVSLYEPRGDYQLQADGMRRAGVGNLYEAFLRLKAQLQDEGLFDPQRKRQPARLPRAIGVVTSLHAAALRDVLSALARRAPQVPVIIYPAPVQGADAAARLAARVAQANQRAEVDTLLLVRGGGSIEDLWSFNDEALAREVAASDIPVISGVGHETDFTIVDFVADLRAPTPTAAAELACVPRGDLLAALRHTAEWLARAQQRRLDQAAQRLDRAAAMLTSPAQRLAHQQERLNTLRHRLASAWRGPQGHRVARLDMLAQRLAHRRPDTGRAAERSAALLAQLGRAQARLAAARQARLDTLAAQLRALDPQHTLARGYAIVRDAAGAIVTDATRLAARDRIEIAVARGRIGADVTDIGTPDGTDGNPALRRG</sequence>
<protein>
    <recommendedName>
        <fullName evidence="1">Exodeoxyribonuclease 7 large subunit</fullName>
        <ecNumber evidence="1">3.1.11.6</ecNumber>
    </recommendedName>
    <alternativeName>
        <fullName evidence="1">Exodeoxyribonuclease VII large subunit</fullName>
        <shortName evidence="1">Exonuclease VII large subunit</shortName>
    </alternativeName>
</protein>
<gene>
    <name evidence="1" type="primary">xseA</name>
    <name type="ordered locus">BP2762</name>
</gene>
<evidence type="ECO:0000255" key="1">
    <source>
        <dbReference type="HAMAP-Rule" id="MF_00378"/>
    </source>
</evidence>
<keyword id="KW-0963">Cytoplasm</keyword>
<keyword id="KW-0269">Exonuclease</keyword>
<keyword id="KW-0378">Hydrolase</keyword>
<keyword id="KW-0540">Nuclease</keyword>
<keyword id="KW-1185">Reference proteome</keyword>
<accession>Q7VVB6</accession>
<dbReference type="EC" id="3.1.11.6" evidence="1"/>
<dbReference type="EMBL" id="BX640419">
    <property type="protein sequence ID" value="CAE43037.1"/>
    <property type="molecule type" value="Genomic_DNA"/>
</dbReference>
<dbReference type="RefSeq" id="NP_881366.1">
    <property type="nucleotide sequence ID" value="NC_002929.2"/>
</dbReference>
<dbReference type="RefSeq" id="WP_010931120.1">
    <property type="nucleotide sequence ID" value="NZ_CP039022.1"/>
</dbReference>
<dbReference type="SMR" id="Q7VVB6"/>
<dbReference type="STRING" id="257313.BP2762"/>
<dbReference type="PaxDb" id="257313-BP2762"/>
<dbReference type="GeneID" id="69602663"/>
<dbReference type="KEGG" id="bpe:BP2762"/>
<dbReference type="PATRIC" id="fig|257313.5.peg.2978"/>
<dbReference type="eggNOG" id="COG1570">
    <property type="taxonomic scope" value="Bacteria"/>
</dbReference>
<dbReference type="HOGENOM" id="CLU_023625_3_1_4"/>
<dbReference type="Proteomes" id="UP000002676">
    <property type="component" value="Chromosome"/>
</dbReference>
<dbReference type="GO" id="GO:0005737">
    <property type="term" value="C:cytoplasm"/>
    <property type="evidence" value="ECO:0007669"/>
    <property type="project" value="UniProtKB-SubCell"/>
</dbReference>
<dbReference type="GO" id="GO:0009318">
    <property type="term" value="C:exodeoxyribonuclease VII complex"/>
    <property type="evidence" value="ECO:0007669"/>
    <property type="project" value="InterPro"/>
</dbReference>
<dbReference type="GO" id="GO:0008855">
    <property type="term" value="F:exodeoxyribonuclease VII activity"/>
    <property type="evidence" value="ECO:0007669"/>
    <property type="project" value="UniProtKB-UniRule"/>
</dbReference>
<dbReference type="GO" id="GO:0003676">
    <property type="term" value="F:nucleic acid binding"/>
    <property type="evidence" value="ECO:0007669"/>
    <property type="project" value="InterPro"/>
</dbReference>
<dbReference type="GO" id="GO:0006308">
    <property type="term" value="P:DNA catabolic process"/>
    <property type="evidence" value="ECO:0007669"/>
    <property type="project" value="UniProtKB-UniRule"/>
</dbReference>
<dbReference type="CDD" id="cd04489">
    <property type="entry name" value="ExoVII_LU_OBF"/>
    <property type="match status" value="1"/>
</dbReference>
<dbReference type="HAMAP" id="MF_00378">
    <property type="entry name" value="Exonuc_7_L"/>
    <property type="match status" value="1"/>
</dbReference>
<dbReference type="InterPro" id="IPR003753">
    <property type="entry name" value="Exonuc_VII_L"/>
</dbReference>
<dbReference type="InterPro" id="IPR020579">
    <property type="entry name" value="Exonuc_VII_lsu_C"/>
</dbReference>
<dbReference type="InterPro" id="IPR025824">
    <property type="entry name" value="OB-fold_nuc-bd_dom"/>
</dbReference>
<dbReference type="NCBIfam" id="TIGR00237">
    <property type="entry name" value="xseA"/>
    <property type="match status" value="1"/>
</dbReference>
<dbReference type="PANTHER" id="PTHR30008">
    <property type="entry name" value="EXODEOXYRIBONUCLEASE 7 LARGE SUBUNIT"/>
    <property type="match status" value="1"/>
</dbReference>
<dbReference type="PANTHER" id="PTHR30008:SF0">
    <property type="entry name" value="EXODEOXYRIBONUCLEASE 7 LARGE SUBUNIT"/>
    <property type="match status" value="1"/>
</dbReference>
<dbReference type="Pfam" id="PF02601">
    <property type="entry name" value="Exonuc_VII_L"/>
    <property type="match status" value="1"/>
</dbReference>
<dbReference type="Pfam" id="PF13742">
    <property type="entry name" value="tRNA_anti_2"/>
    <property type="match status" value="1"/>
</dbReference>
<name>EX7L_BORPE</name>
<reference key="1">
    <citation type="journal article" date="2003" name="Nat. Genet.">
        <title>Comparative analysis of the genome sequences of Bordetella pertussis, Bordetella parapertussis and Bordetella bronchiseptica.</title>
        <authorList>
            <person name="Parkhill J."/>
            <person name="Sebaihia M."/>
            <person name="Preston A."/>
            <person name="Murphy L.D."/>
            <person name="Thomson N.R."/>
            <person name="Harris D.E."/>
            <person name="Holden M.T.G."/>
            <person name="Churcher C.M."/>
            <person name="Bentley S.D."/>
            <person name="Mungall K.L."/>
            <person name="Cerdeno-Tarraga A.-M."/>
            <person name="Temple L."/>
            <person name="James K.D."/>
            <person name="Harris B."/>
            <person name="Quail M.A."/>
            <person name="Achtman M."/>
            <person name="Atkin R."/>
            <person name="Baker S."/>
            <person name="Basham D."/>
            <person name="Bason N."/>
            <person name="Cherevach I."/>
            <person name="Chillingworth T."/>
            <person name="Collins M."/>
            <person name="Cronin A."/>
            <person name="Davis P."/>
            <person name="Doggett J."/>
            <person name="Feltwell T."/>
            <person name="Goble A."/>
            <person name="Hamlin N."/>
            <person name="Hauser H."/>
            <person name="Holroyd S."/>
            <person name="Jagels K."/>
            <person name="Leather S."/>
            <person name="Moule S."/>
            <person name="Norberczak H."/>
            <person name="O'Neil S."/>
            <person name="Ormond D."/>
            <person name="Price C."/>
            <person name="Rabbinowitsch E."/>
            <person name="Rutter S."/>
            <person name="Sanders M."/>
            <person name="Saunders D."/>
            <person name="Seeger K."/>
            <person name="Sharp S."/>
            <person name="Simmonds M."/>
            <person name="Skelton J."/>
            <person name="Squares R."/>
            <person name="Squares S."/>
            <person name="Stevens K."/>
            <person name="Unwin L."/>
            <person name="Whitehead S."/>
            <person name="Barrell B.G."/>
            <person name="Maskell D.J."/>
        </authorList>
    </citation>
    <scope>NUCLEOTIDE SEQUENCE [LARGE SCALE GENOMIC DNA]</scope>
    <source>
        <strain>Tohama I / ATCC BAA-589 / NCTC 13251</strain>
    </source>
</reference>
<comment type="function">
    <text evidence="1">Bidirectionally degrades single-stranded DNA into large acid-insoluble oligonucleotides, which are then degraded further into small acid-soluble oligonucleotides.</text>
</comment>
<comment type="catalytic activity">
    <reaction evidence="1">
        <text>Exonucleolytic cleavage in either 5'- to 3'- or 3'- to 5'-direction to yield nucleoside 5'-phosphates.</text>
        <dbReference type="EC" id="3.1.11.6"/>
    </reaction>
</comment>
<comment type="subunit">
    <text evidence="1">Heterooligomer composed of large and small subunits.</text>
</comment>
<comment type="subcellular location">
    <subcellularLocation>
        <location evidence="1">Cytoplasm</location>
    </subcellularLocation>
</comment>
<comment type="similarity">
    <text evidence="1">Belongs to the XseA family.</text>
</comment>
<organism>
    <name type="scientific">Bordetella pertussis (strain Tohama I / ATCC BAA-589 / NCTC 13251)</name>
    <dbReference type="NCBI Taxonomy" id="257313"/>
    <lineage>
        <taxon>Bacteria</taxon>
        <taxon>Pseudomonadati</taxon>
        <taxon>Pseudomonadota</taxon>
        <taxon>Betaproteobacteria</taxon>
        <taxon>Burkholderiales</taxon>
        <taxon>Alcaligenaceae</taxon>
        <taxon>Bordetella</taxon>
    </lineage>
</organism>
<proteinExistence type="inferred from homology"/>
<feature type="chain" id="PRO_0000273647" description="Exodeoxyribonuclease 7 large subunit">
    <location>
        <begin position="1"/>
        <end position="463"/>
    </location>
</feature>